<reference key="1">
    <citation type="journal article" date="1998" name="Science">
        <title>Complete genome sequence of Treponema pallidum, the syphilis spirochete.</title>
        <authorList>
            <person name="Fraser C.M."/>
            <person name="Norris S.J."/>
            <person name="Weinstock G.M."/>
            <person name="White O."/>
            <person name="Sutton G.G."/>
            <person name="Dodson R.J."/>
            <person name="Gwinn M.L."/>
            <person name="Hickey E.K."/>
            <person name="Clayton R.A."/>
            <person name="Ketchum K.A."/>
            <person name="Sodergren E."/>
            <person name="Hardham J.M."/>
            <person name="McLeod M.P."/>
            <person name="Salzberg S.L."/>
            <person name="Peterson J.D."/>
            <person name="Khalak H.G."/>
            <person name="Richardson D.L."/>
            <person name="Howell J.K."/>
            <person name="Chidambaram M."/>
            <person name="Utterback T.R."/>
            <person name="McDonald L.A."/>
            <person name="Artiach P."/>
            <person name="Bowman C."/>
            <person name="Cotton M.D."/>
            <person name="Fujii C."/>
            <person name="Garland S.A."/>
            <person name="Hatch B."/>
            <person name="Horst K."/>
            <person name="Roberts K.M."/>
            <person name="Sandusky M."/>
            <person name="Weidman J.F."/>
            <person name="Smith H.O."/>
            <person name="Venter J.C."/>
        </authorList>
    </citation>
    <scope>NUCLEOTIDE SEQUENCE [LARGE SCALE GENOMIC DNA]</scope>
    <source>
        <strain>Nichols</strain>
    </source>
</reference>
<accession>O83948</accession>
<protein>
    <recommendedName>
        <fullName>Uncharacterized protein TP_0983</fullName>
    </recommendedName>
</protein>
<name>Y983_TREPA</name>
<evidence type="ECO:0000255" key="1"/>
<feature type="signal peptide" evidence="1">
    <location>
        <begin position="1"/>
        <end position="28"/>
    </location>
</feature>
<feature type="chain" id="PRO_0000014270" description="Uncharacterized protein TP_0983">
    <location>
        <begin position="29"/>
        <end position="238"/>
    </location>
</feature>
<dbReference type="EMBL" id="AE000520">
    <property type="protein sequence ID" value="AAC65941.1"/>
    <property type="molecule type" value="Genomic_DNA"/>
</dbReference>
<dbReference type="PIR" id="E71258">
    <property type="entry name" value="E71258"/>
</dbReference>
<dbReference type="IntAct" id="O83948">
    <property type="interactions" value="6"/>
</dbReference>
<dbReference type="STRING" id="243276.TP_0983"/>
<dbReference type="EnsemblBacteria" id="AAC65941">
    <property type="protein sequence ID" value="AAC65941"/>
    <property type="gene ID" value="TP_0983"/>
</dbReference>
<dbReference type="KEGG" id="tpa:TP_0983"/>
<dbReference type="eggNOG" id="ENOG50343I0">
    <property type="taxonomic scope" value="Bacteria"/>
</dbReference>
<dbReference type="HOGENOM" id="CLU_104224_0_0_12"/>
<dbReference type="OrthoDB" id="370144at2"/>
<dbReference type="Proteomes" id="UP000000811">
    <property type="component" value="Chromosome"/>
</dbReference>
<sequence length="238" mass="27194">MSRNSRGSGRYVFVVLACVFGYTRAVHAEVYTDPSTSGHVTISIPIWAFVEPQPGVMTQQAESPRTPPPQTLRELGAFVLGGAVYGWRFSYTPKEKKRAVMEHFTLTPIFPLPPDSPQISLRHVRTPYPYIHCRAEYSLDARHATHMRQSRNLTYQRAQGRGRGERKEELKGVYHAYHRAIVDALRKTVRKTQKNKPKEVEGMLYVKDNPRLFVEAGEFVAELSLSVHFTKITPYSVY</sequence>
<proteinExistence type="inferred from homology"/>
<keyword id="KW-1185">Reference proteome</keyword>
<keyword id="KW-0732">Signal</keyword>
<gene>
    <name type="ordered locus">TP_0983</name>
</gene>
<organism>
    <name type="scientific">Treponema pallidum (strain Nichols)</name>
    <dbReference type="NCBI Taxonomy" id="243276"/>
    <lineage>
        <taxon>Bacteria</taxon>
        <taxon>Pseudomonadati</taxon>
        <taxon>Spirochaetota</taxon>
        <taxon>Spirochaetia</taxon>
        <taxon>Spirochaetales</taxon>
        <taxon>Treponemataceae</taxon>
        <taxon>Treponema</taxon>
    </lineage>
</organism>